<feature type="chain" id="PRO_0000233565" description="Small ribosomal subunit protein uS17">
    <location>
        <begin position="1"/>
        <end position="84"/>
    </location>
</feature>
<accession>Q3YWU8</accession>
<evidence type="ECO:0000255" key="1">
    <source>
        <dbReference type="HAMAP-Rule" id="MF_01345"/>
    </source>
</evidence>
<evidence type="ECO:0000305" key="2"/>
<protein>
    <recommendedName>
        <fullName evidence="1">Small ribosomal subunit protein uS17</fullName>
    </recommendedName>
    <alternativeName>
        <fullName evidence="2">30S ribosomal protein S17</fullName>
    </alternativeName>
</protein>
<proteinExistence type="inferred from homology"/>
<keyword id="KW-1185">Reference proteome</keyword>
<keyword id="KW-0687">Ribonucleoprotein</keyword>
<keyword id="KW-0689">Ribosomal protein</keyword>
<keyword id="KW-0694">RNA-binding</keyword>
<keyword id="KW-0699">rRNA-binding</keyword>
<name>RS17_SHISS</name>
<organism>
    <name type="scientific">Shigella sonnei (strain Ss046)</name>
    <dbReference type="NCBI Taxonomy" id="300269"/>
    <lineage>
        <taxon>Bacteria</taxon>
        <taxon>Pseudomonadati</taxon>
        <taxon>Pseudomonadota</taxon>
        <taxon>Gammaproteobacteria</taxon>
        <taxon>Enterobacterales</taxon>
        <taxon>Enterobacteriaceae</taxon>
        <taxon>Shigella</taxon>
    </lineage>
</organism>
<gene>
    <name evidence="1" type="primary">rpsQ</name>
    <name type="ordered locus">SSON_3452</name>
</gene>
<sequence length="84" mass="9704">MTDKIRTLQGRVVSDKMEKSIVVAIERFVKHPIYGKFIKRTTKLHVHDENNECGIGDVVEIRECRPLSKTKSWTLVRVVEKAVL</sequence>
<comment type="function">
    <text evidence="1">One of the primary rRNA binding proteins, it binds specifically to the 5'-end of 16S ribosomal RNA.</text>
</comment>
<comment type="subunit">
    <text evidence="1">Part of the 30S ribosomal subunit.</text>
</comment>
<comment type="similarity">
    <text evidence="1">Belongs to the universal ribosomal protein uS17 family.</text>
</comment>
<dbReference type="EMBL" id="CP000038">
    <property type="protein sequence ID" value="AAZ90014.1"/>
    <property type="molecule type" value="Genomic_DNA"/>
</dbReference>
<dbReference type="RefSeq" id="WP_000130100.1">
    <property type="nucleotide sequence ID" value="NC_007384.1"/>
</dbReference>
<dbReference type="SMR" id="Q3YWU8"/>
<dbReference type="GeneID" id="93778676"/>
<dbReference type="KEGG" id="ssn:SSON_3452"/>
<dbReference type="HOGENOM" id="CLU_073626_1_1_6"/>
<dbReference type="Proteomes" id="UP000002529">
    <property type="component" value="Chromosome"/>
</dbReference>
<dbReference type="GO" id="GO:0022627">
    <property type="term" value="C:cytosolic small ribosomal subunit"/>
    <property type="evidence" value="ECO:0007669"/>
    <property type="project" value="TreeGrafter"/>
</dbReference>
<dbReference type="GO" id="GO:0019843">
    <property type="term" value="F:rRNA binding"/>
    <property type="evidence" value="ECO:0007669"/>
    <property type="project" value="UniProtKB-UniRule"/>
</dbReference>
<dbReference type="GO" id="GO:0003735">
    <property type="term" value="F:structural constituent of ribosome"/>
    <property type="evidence" value="ECO:0007669"/>
    <property type="project" value="InterPro"/>
</dbReference>
<dbReference type="GO" id="GO:0006412">
    <property type="term" value="P:translation"/>
    <property type="evidence" value="ECO:0007669"/>
    <property type="project" value="UniProtKB-UniRule"/>
</dbReference>
<dbReference type="CDD" id="cd00364">
    <property type="entry name" value="Ribosomal_uS17"/>
    <property type="match status" value="1"/>
</dbReference>
<dbReference type="FunFam" id="2.40.50.140:FF:000014">
    <property type="entry name" value="30S ribosomal protein S17"/>
    <property type="match status" value="1"/>
</dbReference>
<dbReference type="Gene3D" id="2.40.50.140">
    <property type="entry name" value="Nucleic acid-binding proteins"/>
    <property type="match status" value="1"/>
</dbReference>
<dbReference type="HAMAP" id="MF_01345_B">
    <property type="entry name" value="Ribosomal_uS17_B"/>
    <property type="match status" value="1"/>
</dbReference>
<dbReference type="InterPro" id="IPR012340">
    <property type="entry name" value="NA-bd_OB-fold"/>
</dbReference>
<dbReference type="InterPro" id="IPR000266">
    <property type="entry name" value="Ribosomal_uS17"/>
</dbReference>
<dbReference type="InterPro" id="IPR019984">
    <property type="entry name" value="Ribosomal_uS17_bact/chlr"/>
</dbReference>
<dbReference type="InterPro" id="IPR019979">
    <property type="entry name" value="Ribosomal_uS17_CS"/>
</dbReference>
<dbReference type="NCBIfam" id="NF004123">
    <property type="entry name" value="PRK05610.1"/>
    <property type="match status" value="1"/>
</dbReference>
<dbReference type="NCBIfam" id="TIGR03635">
    <property type="entry name" value="uS17_bact"/>
    <property type="match status" value="1"/>
</dbReference>
<dbReference type="PANTHER" id="PTHR10744">
    <property type="entry name" value="40S RIBOSOMAL PROTEIN S11 FAMILY MEMBER"/>
    <property type="match status" value="1"/>
</dbReference>
<dbReference type="PANTHER" id="PTHR10744:SF1">
    <property type="entry name" value="SMALL RIBOSOMAL SUBUNIT PROTEIN US17M"/>
    <property type="match status" value="1"/>
</dbReference>
<dbReference type="Pfam" id="PF00366">
    <property type="entry name" value="Ribosomal_S17"/>
    <property type="match status" value="1"/>
</dbReference>
<dbReference type="PRINTS" id="PR00973">
    <property type="entry name" value="RIBOSOMALS17"/>
</dbReference>
<dbReference type="SUPFAM" id="SSF50249">
    <property type="entry name" value="Nucleic acid-binding proteins"/>
    <property type="match status" value="1"/>
</dbReference>
<dbReference type="PROSITE" id="PS00056">
    <property type="entry name" value="RIBOSOMAL_S17"/>
    <property type="match status" value="1"/>
</dbReference>
<reference key="1">
    <citation type="journal article" date="2005" name="Nucleic Acids Res.">
        <title>Genome dynamics and diversity of Shigella species, the etiologic agents of bacillary dysentery.</title>
        <authorList>
            <person name="Yang F."/>
            <person name="Yang J."/>
            <person name="Zhang X."/>
            <person name="Chen L."/>
            <person name="Jiang Y."/>
            <person name="Yan Y."/>
            <person name="Tang X."/>
            <person name="Wang J."/>
            <person name="Xiong Z."/>
            <person name="Dong J."/>
            <person name="Xue Y."/>
            <person name="Zhu Y."/>
            <person name="Xu X."/>
            <person name="Sun L."/>
            <person name="Chen S."/>
            <person name="Nie H."/>
            <person name="Peng J."/>
            <person name="Xu J."/>
            <person name="Wang Y."/>
            <person name="Yuan Z."/>
            <person name="Wen Y."/>
            <person name="Yao Z."/>
            <person name="Shen Y."/>
            <person name="Qiang B."/>
            <person name="Hou Y."/>
            <person name="Yu J."/>
            <person name="Jin Q."/>
        </authorList>
    </citation>
    <scope>NUCLEOTIDE SEQUENCE [LARGE SCALE GENOMIC DNA]</scope>
    <source>
        <strain>Ss046</strain>
    </source>
</reference>